<keyword id="KW-0472">Membrane</keyword>
<keyword id="KW-1185">Reference proteome</keyword>
<keyword id="KW-0812">Transmembrane</keyword>
<keyword id="KW-1133">Transmembrane helix</keyword>
<reference key="1">
    <citation type="journal article" date="2002" name="J. Bacteriol.">
        <title>Whole-genome comparison of Mycobacterium tuberculosis clinical and laboratory strains.</title>
        <authorList>
            <person name="Fleischmann R.D."/>
            <person name="Alland D."/>
            <person name="Eisen J.A."/>
            <person name="Carpenter L."/>
            <person name="White O."/>
            <person name="Peterson J.D."/>
            <person name="DeBoy R.T."/>
            <person name="Dodson R.J."/>
            <person name="Gwinn M.L."/>
            <person name="Haft D.H."/>
            <person name="Hickey E.K."/>
            <person name="Kolonay J.F."/>
            <person name="Nelson W.C."/>
            <person name="Umayam L.A."/>
            <person name="Ermolaeva M.D."/>
            <person name="Salzberg S.L."/>
            <person name="Delcher A."/>
            <person name="Utterback T.R."/>
            <person name="Weidman J.F."/>
            <person name="Khouri H.M."/>
            <person name="Gill J."/>
            <person name="Mikula A."/>
            <person name="Bishai W."/>
            <person name="Jacobs W.R. Jr."/>
            <person name="Venter J.C."/>
            <person name="Fraser C.M."/>
        </authorList>
    </citation>
    <scope>NUCLEOTIDE SEQUENCE [LARGE SCALE GENOMIC DNA]</scope>
    <source>
        <strain>CDC 1551 / Oshkosh</strain>
    </source>
</reference>
<gene>
    <name type="ordered locus">MT1568</name>
</gene>
<accession>P9WLV8</accession>
<accession>L0T733</accession>
<accession>P71797</accession>
<accession>Q50590</accession>
<evidence type="ECO:0000255" key="1"/>
<evidence type="ECO:0000305" key="2"/>
<feature type="chain" id="PRO_0000427411" description="Uncharacterized protein MT1568">
    <location>
        <begin position="1"/>
        <end position="319"/>
    </location>
</feature>
<feature type="transmembrane region" description="Helical" evidence="1">
    <location>
        <begin position="270"/>
        <end position="290"/>
    </location>
</feature>
<dbReference type="EMBL" id="AE000516">
    <property type="protein sequence ID" value="AAK45835.1"/>
    <property type="molecule type" value="Genomic_DNA"/>
</dbReference>
<dbReference type="PIR" id="A70715">
    <property type="entry name" value="A70715"/>
</dbReference>
<dbReference type="RefSeq" id="WP_003407655.1">
    <property type="nucleotide sequence ID" value="NZ_KK341227.1"/>
</dbReference>
<dbReference type="SMR" id="P9WLV8"/>
<dbReference type="CAZy" id="GT2">
    <property type="family name" value="Glycosyltransferase Family 2"/>
</dbReference>
<dbReference type="KEGG" id="mtc:MT1568"/>
<dbReference type="PATRIC" id="fig|83331.31.peg.1689"/>
<dbReference type="HOGENOM" id="CLU_823421_0_0_11"/>
<dbReference type="Proteomes" id="UP000001020">
    <property type="component" value="Chromosome"/>
</dbReference>
<dbReference type="GO" id="GO:0016020">
    <property type="term" value="C:membrane"/>
    <property type="evidence" value="ECO:0007669"/>
    <property type="project" value="UniProtKB-SubCell"/>
</dbReference>
<dbReference type="Gene3D" id="3.90.550.10">
    <property type="entry name" value="Spore Coat Polysaccharide Biosynthesis Protein SpsA, Chain A"/>
    <property type="match status" value="1"/>
</dbReference>
<dbReference type="InterPro" id="IPR001173">
    <property type="entry name" value="Glyco_trans_2-like"/>
</dbReference>
<dbReference type="InterPro" id="IPR050834">
    <property type="entry name" value="Glycosyltransf_2"/>
</dbReference>
<dbReference type="InterPro" id="IPR029044">
    <property type="entry name" value="Nucleotide-diphossugar_trans"/>
</dbReference>
<dbReference type="PANTHER" id="PTHR43685">
    <property type="entry name" value="GLYCOSYLTRANSFERASE"/>
    <property type="match status" value="1"/>
</dbReference>
<dbReference type="PANTHER" id="PTHR43685:SF11">
    <property type="entry name" value="GLYCOSYLTRANSFERASE TAGX-RELATED"/>
    <property type="match status" value="1"/>
</dbReference>
<dbReference type="Pfam" id="PF00535">
    <property type="entry name" value="Glycos_transf_2"/>
    <property type="match status" value="1"/>
</dbReference>
<dbReference type="SUPFAM" id="SSF53448">
    <property type="entry name" value="Nucleotide-diphospho-sugar transferases"/>
    <property type="match status" value="1"/>
</dbReference>
<organism>
    <name type="scientific">Mycobacterium tuberculosis (strain CDC 1551 / Oshkosh)</name>
    <dbReference type="NCBI Taxonomy" id="83331"/>
    <lineage>
        <taxon>Bacteria</taxon>
        <taxon>Bacillati</taxon>
        <taxon>Actinomycetota</taxon>
        <taxon>Actinomycetes</taxon>
        <taxon>Mycobacteriales</taxon>
        <taxon>Mycobacteriaceae</taxon>
        <taxon>Mycobacterium</taxon>
        <taxon>Mycobacterium tuberculosis complex</taxon>
    </lineage>
</organism>
<protein>
    <recommendedName>
        <fullName>Uncharacterized protein MT1568</fullName>
    </recommendedName>
</protein>
<sequence>MVPGDASSVVSVNPAKPLISVCIPMYNNGATIERCLRSILEQEGVEFEIVVVDDDSSDDCAAIAATMLRPGDRLLRNEPRLGLNRNHNKCLEVARGGLIQFVHGDDRLLPGALQTLSRRFEDPSVGMAFAPRRVESDDIKWQQRYGRVHTRFRKLRDRNHGPSLVLQMVLHGAKENWIGEPTAVMFRRQLALDAGGFRTDIYQLVDVDFWLRLMLRSAVCFVPHELSVRRHTAATETTRVMATRRNVLDRQRILTWLIVDPLSPNSVRSAAALWWIPAWLAMIVEVAVLGPQRRTHLKALAPAPFREFAHARRQLPMAD</sequence>
<comment type="subcellular location">
    <subcellularLocation>
        <location evidence="2">Membrane</location>
        <topology evidence="2">Single-pass membrane protein</topology>
    </subcellularLocation>
</comment>
<proteinExistence type="predicted"/>
<name>Y1518_MYCTO</name>